<reference key="1">
    <citation type="journal article" date="1993" name="Biochim. Biophys. Acta">
        <title>Expression of a human homeobox-containing gene is regulated by 1,25(OH)2D3 in bone cells.</title>
        <authorList>
            <person name="Hodgkinson J.E."/>
            <person name="Davidson C.L."/>
            <person name="Beresford J."/>
            <person name="Sharpe P.T."/>
        </authorList>
    </citation>
    <scope>NUCLEOTIDE SEQUENCE [MRNA]</scope>
    <scope>VARIANT THR-129</scope>
    <source>
        <tissue>Osteoblast</tissue>
    </source>
</reference>
<reference key="2">
    <citation type="journal article" date="1993" name="Cell">
        <title>A mutation in the homeodomain of the human MSX2 gene in a family affected with autosomal dominant craniosynostosis.</title>
        <authorList>
            <person name="Jabs E.W."/>
            <person name="Ma L."/>
            <person name="Li X."/>
            <person name="Mueller U."/>
            <person name="Sparkes R.S."/>
            <person name="Luo W."/>
            <person name="Jackson C.E."/>
            <person name="Warman M.L."/>
            <person name="Mulliken J.B."/>
            <person name="Snead M."/>
            <person name="Haworth I."/>
            <person name="Maxson R.E."/>
        </authorList>
    </citation>
    <scope>NUCLEOTIDE SEQUENCE [GENOMIC DNA]</scope>
    <scope>VARIANT CRS2 HIS-148</scope>
    <scope>VARIANT THR-129</scope>
</reference>
<reference key="3">
    <citation type="journal article" date="1994" name="Kokubyo Gakkai Zasshi">
        <title>Molecular cloning and expression of homeobox-containing genes during hard tissue development.</title>
        <authorList>
            <person name="Iimura T."/>
        </authorList>
    </citation>
    <scope>NUCLEOTIDE SEQUENCE [GENOMIC DNA / MRNA]</scope>
    <scope>VARIANT THR-129</scope>
</reference>
<reference key="4">
    <citation type="journal article" date="1997" name="DNA Seq.">
        <title>Characterization of two length cDNA for human MSX-2 from dental pulp-derived cells.</title>
        <authorList>
            <person name="Iimura T."/>
            <person name="Takeda K."/>
            <person name="Goseki M."/>
            <person name="Maruoka Y."/>
            <person name="Sasaki S."/>
            <person name="Oida S."/>
        </authorList>
    </citation>
    <scope>NUCLEOTIDE SEQUENCE [MRNA]</scope>
    <source>
        <tissue>Tooth</tissue>
    </source>
</reference>
<reference key="5">
    <citation type="submission" date="2003-08" db="EMBL/GenBank/DDBJ databases">
        <title>Cloning of human full-length CDSs in BD Creator(TM) system donor vector.</title>
        <authorList>
            <person name="Kalnine N."/>
            <person name="Chen X."/>
            <person name="Rolfs A."/>
            <person name="Halleck A."/>
            <person name="Hines L."/>
            <person name="Eisenstein S."/>
            <person name="Koundinya M."/>
            <person name="Raphael J."/>
            <person name="Moreira D."/>
            <person name="Kelley T."/>
            <person name="LaBaer J."/>
            <person name="Lin Y."/>
            <person name="Phelan M."/>
            <person name="Farmer A."/>
        </authorList>
    </citation>
    <scope>NUCLEOTIDE SEQUENCE [LARGE SCALE MRNA]</scope>
    <scope>VARIANT THR-129</scope>
</reference>
<reference key="6">
    <citation type="journal article" date="2004" name="Nature">
        <title>The DNA sequence and comparative analysis of human chromosome 5.</title>
        <authorList>
            <person name="Schmutz J."/>
            <person name="Martin J."/>
            <person name="Terry A."/>
            <person name="Couronne O."/>
            <person name="Grimwood J."/>
            <person name="Lowry S."/>
            <person name="Gordon L.A."/>
            <person name="Scott D."/>
            <person name="Xie G."/>
            <person name="Huang W."/>
            <person name="Hellsten U."/>
            <person name="Tran-Gyamfi M."/>
            <person name="She X."/>
            <person name="Prabhakar S."/>
            <person name="Aerts A."/>
            <person name="Altherr M."/>
            <person name="Bajorek E."/>
            <person name="Black S."/>
            <person name="Branscomb E."/>
            <person name="Caoile C."/>
            <person name="Challacombe J.F."/>
            <person name="Chan Y.M."/>
            <person name="Denys M."/>
            <person name="Detter J.C."/>
            <person name="Escobar J."/>
            <person name="Flowers D."/>
            <person name="Fotopulos D."/>
            <person name="Glavina T."/>
            <person name="Gomez M."/>
            <person name="Gonzales E."/>
            <person name="Goodstein D."/>
            <person name="Grigoriev I."/>
            <person name="Groza M."/>
            <person name="Hammon N."/>
            <person name="Hawkins T."/>
            <person name="Haydu L."/>
            <person name="Israni S."/>
            <person name="Jett J."/>
            <person name="Kadner K."/>
            <person name="Kimball H."/>
            <person name="Kobayashi A."/>
            <person name="Lopez F."/>
            <person name="Lou Y."/>
            <person name="Martinez D."/>
            <person name="Medina C."/>
            <person name="Morgan J."/>
            <person name="Nandkeshwar R."/>
            <person name="Noonan J.P."/>
            <person name="Pitluck S."/>
            <person name="Pollard M."/>
            <person name="Predki P."/>
            <person name="Priest J."/>
            <person name="Ramirez L."/>
            <person name="Retterer J."/>
            <person name="Rodriguez A."/>
            <person name="Rogers S."/>
            <person name="Salamov A."/>
            <person name="Salazar A."/>
            <person name="Thayer N."/>
            <person name="Tice H."/>
            <person name="Tsai M."/>
            <person name="Ustaszewska A."/>
            <person name="Vo N."/>
            <person name="Wheeler J."/>
            <person name="Wu K."/>
            <person name="Yang J."/>
            <person name="Dickson M."/>
            <person name="Cheng J.-F."/>
            <person name="Eichler E.E."/>
            <person name="Olsen A."/>
            <person name="Pennacchio L.A."/>
            <person name="Rokhsar D.S."/>
            <person name="Richardson P."/>
            <person name="Lucas S.M."/>
            <person name="Myers R.M."/>
            <person name="Rubin E.M."/>
        </authorList>
    </citation>
    <scope>NUCLEOTIDE SEQUENCE [LARGE SCALE GENOMIC DNA]</scope>
</reference>
<reference key="7">
    <citation type="submission" date="2005-09" db="EMBL/GenBank/DDBJ databases">
        <authorList>
            <person name="Mural R.J."/>
            <person name="Istrail S."/>
            <person name="Sutton G.G."/>
            <person name="Florea L."/>
            <person name="Halpern A.L."/>
            <person name="Mobarry C.M."/>
            <person name="Lippert R."/>
            <person name="Walenz B."/>
            <person name="Shatkay H."/>
            <person name="Dew I."/>
            <person name="Miller J.R."/>
            <person name="Flanigan M.J."/>
            <person name="Edwards N.J."/>
            <person name="Bolanos R."/>
            <person name="Fasulo D."/>
            <person name="Halldorsson B.V."/>
            <person name="Hannenhalli S."/>
            <person name="Turner R."/>
            <person name="Yooseph S."/>
            <person name="Lu F."/>
            <person name="Nusskern D.R."/>
            <person name="Shue B.C."/>
            <person name="Zheng X.H."/>
            <person name="Zhong F."/>
            <person name="Delcher A.L."/>
            <person name="Huson D.H."/>
            <person name="Kravitz S.A."/>
            <person name="Mouchard L."/>
            <person name="Reinert K."/>
            <person name="Remington K.A."/>
            <person name="Clark A.G."/>
            <person name="Waterman M.S."/>
            <person name="Eichler E.E."/>
            <person name="Adams M.D."/>
            <person name="Hunkapiller M.W."/>
            <person name="Myers E.W."/>
            <person name="Venter J.C."/>
        </authorList>
    </citation>
    <scope>NUCLEOTIDE SEQUENCE [LARGE SCALE GENOMIC DNA]</scope>
    <scope>VARIANT THR-129</scope>
</reference>
<reference key="8">
    <citation type="journal article" date="2004" name="Genome Res.">
        <title>The status, quality, and expansion of the NIH full-length cDNA project: the Mammalian Gene Collection (MGC).</title>
        <authorList>
            <consortium name="The MGC Project Team"/>
        </authorList>
    </citation>
    <scope>NUCLEOTIDE SEQUENCE [LARGE SCALE MRNA]</scope>
    <scope>VARIANT THR-129</scope>
    <source>
        <tissue>Pancreas</tissue>
    </source>
</reference>
<reference key="9">
    <citation type="journal article" date="1993" name="Biochem. Biophys. Res. Commun.">
        <title>Over-expression of HOX-8, the human homologue of the mouse Hox-8 homeobox gene, in human tumors.</title>
        <authorList>
            <person name="Suzuki M."/>
            <person name="Tanaka M."/>
            <person name="Iwase T."/>
            <person name="Naito Y."/>
            <person name="Sugimura H."/>
            <person name="Kino I."/>
        </authorList>
    </citation>
    <scope>NUCLEOTIDE SEQUENCE [MRNA] OF 96-267</scope>
    <scope>VARIANT THR-129</scope>
    <source>
        <tissue>Ovary tumor</tissue>
    </source>
</reference>
<reference key="10">
    <citation type="journal article" date="1994" name="Gene">
        <title>Identification of homeobox genes expressed in human haemopoietic progenitor cells.</title>
        <authorList>
            <person name="Moretti P."/>
            <person name="Simmons P."/>
            <person name="Thomas P."/>
            <person name="Haylock D."/>
            <person name="Rathjen P."/>
            <person name="Vadas M."/>
            <person name="D'Andrea R."/>
        </authorList>
    </citation>
    <scope>NUCLEOTIDE SEQUENCE [MRNA] OF 150-188</scope>
    <source>
        <tissue>Bone marrow</tissue>
    </source>
</reference>
<reference key="11">
    <citation type="journal article" date="2002" name="J. Biol. Chem.">
        <title>Regulation of osteocalcin gene expression by a novel Ku antigen transcription factor complex.</title>
        <authorList>
            <person name="Willis D.M."/>
            <person name="Loewy A.P."/>
            <person name="Charlton-Kachigian N."/>
            <person name="Shao J.-S."/>
            <person name="Ornitz D.M."/>
            <person name="Towler D.A."/>
        </authorList>
    </citation>
    <scope>FUNCTION</scope>
    <scope>INTERACTION WITH XRCC6 AND XRCC5</scope>
    <scope>MUTAGENESIS OF THR-147</scope>
    <source>
        <tissue>Osteoblast</tissue>
    </source>
</reference>
<reference key="12">
    <citation type="journal article" date="2003" name="Eur. J. Hum. Genet.">
        <title>Parietal foramina with cleidocranial dysplasia is caused by mutation in MSX2.</title>
        <authorList>
            <person name="Garcia-Minaur S."/>
            <person name="Mavrogiannis L.A."/>
            <person name="Rannan-Eliya S.V."/>
            <person name="Hendry M.A."/>
            <person name="Liston W.A."/>
            <person name="Porteous M.E.M."/>
            <person name="Wilkie A.O.M."/>
        </authorList>
    </citation>
    <scope>INVOLVEMENT IN PFMCCD</scope>
</reference>
<reference key="13">
    <citation type="journal article" date="2000" name="Hum. Mol. Genet.">
        <title>Identification of mutations in the MSX2 homeobox gene in families affected with foramina parietalia permagna.</title>
        <authorList>
            <person name="Wuyts W."/>
            <person name="Reardon W."/>
            <person name="Preis S."/>
            <person name="Homfray T."/>
            <person name="Rasore-Quartino A."/>
            <person name="Christians H."/>
            <person name="Willems P.J."/>
            <person name="Van Hul W."/>
        </authorList>
    </citation>
    <scope>VARIANTS PFM1 PRO-154 AND HIS-172</scope>
</reference>
<reference key="14">
    <citation type="journal article" date="2000" name="Nat. Genet.">
        <title>Functional haploinsufficiency of the human homeobox gene MSX2 causes defects in skull ossification.</title>
        <authorList>
            <person name="Wilkie A.O.M."/>
            <person name="Tang Z."/>
            <person name="Elanko N."/>
            <person name="Walsh S."/>
            <person name="Twigg S.R.F."/>
            <person name="Hurst J.A."/>
            <person name="Wall S.A."/>
            <person name="Chrzanowska K.H."/>
            <person name="Maxson R.E. Jr."/>
        </authorList>
    </citation>
    <scope>VARIANTS PFM1 159-ARG-LYS-160 DEL AND HIS-172</scope>
    <scope>VARIANT THR-129</scope>
</reference>
<reference key="15">
    <citation type="journal article" date="2013" name="Am. J. Med. Genet. A">
        <title>Second family with the Boston-type craniosynostosis syndrome: novel mutation and expansion of the clinical spectrum.</title>
        <authorList>
            <person name="Janssen A."/>
            <person name="Hosen M.J."/>
            <person name="Jeannin P."/>
            <person name="Coucke P.J."/>
            <person name="De Paepe A."/>
            <person name="Vanakker O.M."/>
        </authorList>
    </citation>
    <scope>VARIANT CRS2 LEU-148</scope>
</reference>
<reference key="16">
    <citation type="journal article" date="2013" name="Am. J. Med. Genet. A">
        <title>Boston type craniosynostosis: report of a second mutation in MSX2.</title>
        <authorList>
            <person name="Florisson J.M."/>
            <person name="Verkerk A.J."/>
            <person name="Huigh D."/>
            <person name="Hoogeboom A.J."/>
            <person name="Swagemakers S."/>
            <person name="Kremer A."/>
            <person name="Heijsman D."/>
            <person name="Lequin M.H."/>
            <person name="Mathijssen I.M."/>
            <person name="van der Spek P.J."/>
        </authorList>
    </citation>
    <scope>VARIANT CRS2 LEU-148</scope>
</reference>
<sequence length="267" mass="28897">MASPSKGNDLFSPDEEGPAVVAGPGPGPGGAEGAAEERRVKVSSLPFSVEALMSDKKPPKEASPLPAESASAGATLRPLLLSGHGAREAHSPGPLVKPFETASVKSENSEDGAAWMQEPGRYSPPPRHMSPTTCTLRKHKTNRKPRTPFTTSQLLALERKFRQKQYLSIAERAEFSSSLNLTETQVKIWFQNRRAKAKRLQEAELEKLKMAAKPMLPSSFSLPFPISSPLQAASIYGASYPFHRPVLPIPPVGLYATPVGYGMYHLS</sequence>
<comment type="function">
    <text evidence="6">Acts as a transcriptional regulator in bone development. Represses the ALPL promoter activity and antagonizes the stimulatory effect of DLX5 on ALPL expression during osteoblast differentiation. Probable morphogenetic role. May play a role in limb-pattern formation. In osteoblasts, suppresses transcription driven by the osteocalcin FGF response element (OCFRE). Binds to the homeodomain-response element of the ALPL promoter.</text>
</comment>
<comment type="subunit">
    <text evidence="1 6">Interacts with MINT (By similarity). Interacts with XRCC6 (Ku70) and XRCC5 (Ku80).</text>
</comment>
<comment type="interaction">
    <interactant intactId="EBI-6447480">
        <id>P35548</id>
    </interactant>
    <interactant intactId="EBI-10171570">
        <id>Q68D86</id>
        <label>CCDC102B</label>
    </interactant>
    <organismsDiffer>false</organismsDiffer>
    <experiments>3</experiments>
</comment>
<comment type="interaction">
    <interactant intactId="EBI-6447480">
        <id>P35548</id>
    </interactant>
    <interactant intactId="EBI-10192241">
        <id>O95833</id>
        <label>CLIC3</label>
    </interactant>
    <organismsDiffer>false</organismsDiffer>
    <experiments>3</experiments>
</comment>
<comment type="interaction">
    <interactant intactId="EBI-6447480">
        <id>P35548</id>
    </interactant>
    <interactant intactId="EBI-10976677">
        <id>G5E9A7</id>
        <label>DMWD</label>
    </interactant>
    <organismsDiffer>false</organismsDiffer>
    <experiments>3</experiments>
</comment>
<comment type="interaction">
    <interactant intactId="EBI-6447480">
        <id>P35548</id>
    </interactant>
    <interactant intactId="EBI-10182490">
        <id>O15197-2</id>
        <label>EPHB6</label>
    </interactant>
    <organismsDiffer>false</organismsDiffer>
    <experiments>3</experiments>
</comment>
<comment type="interaction">
    <interactant intactId="EBI-6447480">
        <id>P35548</id>
    </interactant>
    <interactant intactId="EBI-1759806">
        <id>O75593</id>
        <label>FOXH1</label>
    </interactant>
    <organismsDiffer>false</organismsDiffer>
    <experiments>3</experiments>
</comment>
<comment type="interaction">
    <interactant intactId="EBI-6447480">
        <id>P35548</id>
    </interactant>
    <interactant intactId="EBI-2806671">
        <id>P23769</id>
        <label>GATA2</label>
    </interactant>
    <organismsDiffer>false</organismsDiffer>
    <experiments>3</experiments>
</comment>
<comment type="interaction">
    <interactant intactId="EBI-6447480">
        <id>P35548</id>
    </interactant>
    <interactant intactId="EBI-1779423">
        <id>P31274</id>
        <label>HOXC9</label>
    </interactant>
    <organismsDiffer>false</organismsDiffer>
    <experiments>3</experiments>
</comment>
<comment type="interaction">
    <interactant intactId="EBI-6447480">
        <id>P35548</id>
    </interactant>
    <interactant intactId="EBI-466029">
        <id>P42858</id>
        <label>HTT</label>
    </interactant>
    <organismsDiffer>false</organismsDiffer>
    <experiments>12</experiments>
</comment>
<comment type="interaction">
    <interactant intactId="EBI-6447480">
        <id>P35548</id>
    </interactant>
    <interactant intactId="EBI-739546">
        <id>Q96PV6</id>
        <label>LENG8</label>
    </interactant>
    <organismsDiffer>false</organismsDiffer>
    <experiments>3</experiments>
</comment>
<comment type="interaction">
    <interactant intactId="EBI-6447480">
        <id>P35548</id>
    </interactant>
    <interactant intactId="EBI-959949">
        <id>P28482</id>
        <label>MAPK1</label>
    </interactant>
    <organismsDiffer>false</organismsDiffer>
    <experiments>3</experiments>
</comment>
<comment type="interaction">
    <interactant intactId="EBI-6447480">
        <id>P35548</id>
    </interactant>
    <interactant intactId="EBI-741424">
        <id>Q8NDC0</id>
        <label>MAPK1IP1L</label>
    </interactant>
    <organismsDiffer>false</organismsDiffer>
    <experiments>3</experiments>
</comment>
<comment type="interaction">
    <interactant intactId="EBI-6447480">
        <id>P35548</id>
    </interactant>
    <interactant intactId="EBI-2515597">
        <id>Q96HR8</id>
        <label>NAF1</label>
    </interactant>
    <organismsDiffer>false</organismsDiffer>
    <experiments>3</experiments>
</comment>
<comment type="interaction">
    <interactant intactId="EBI-6447480">
        <id>P35548</id>
    </interactant>
    <interactant intactId="EBI-11022007">
        <id>Q9HBE1-4</id>
        <label>PATZ1</label>
    </interactant>
    <organismsDiffer>false</organismsDiffer>
    <experiments>3</experiments>
</comment>
<comment type="interaction">
    <interactant intactId="EBI-6447480">
        <id>P35548</id>
    </interactant>
    <interactant intactId="EBI-748265">
        <id>P78337</id>
        <label>PITX1</label>
    </interactant>
    <organismsDiffer>false</organismsDiffer>
    <experiments>3</experiments>
</comment>
<comment type="interaction">
    <interactant intactId="EBI-6447480">
        <id>P35548</id>
    </interactant>
    <interactant intactId="EBI-8673859">
        <id>P28069</id>
        <label>POU1F1</label>
    </interactant>
    <organismsDiffer>false</organismsDiffer>
    <experiments>3</experiments>
</comment>
<comment type="interaction">
    <interactant intactId="EBI-6447480">
        <id>P35548</id>
    </interactant>
    <interactant intactId="EBI-12918396">
        <id>P09086-4</id>
        <label>POU2F2</label>
    </interactant>
    <organismsDiffer>false</organismsDiffer>
    <experiments>3</experiments>
</comment>
<comment type="interaction">
    <interactant intactId="EBI-6447480">
        <id>P35548</id>
    </interactant>
    <interactant intactId="EBI-12029004">
        <id>P78424</id>
        <label>POU6F2</label>
    </interactant>
    <organismsDiffer>false</organismsDiffer>
    <experiments>3</experiments>
</comment>
<comment type="interaction">
    <interactant intactId="EBI-6447480">
        <id>P35548</id>
    </interactant>
    <interactant intactId="EBI-740924">
        <id>Q9NZ81</id>
        <label>PRR13</label>
    </interactant>
    <organismsDiffer>false</organismsDiffer>
    <experiments>3</experiments>
</comment>
<comment type="interaction">
    <interactant intactId="EBI-6447480">
        <id>P35548</id>
    </interactant>
    <interactant intactId="EBI-11987469">
        <id>Q6ZRY4</id>
        <label>RBPMS2</label>
    </interactant>
    <organismsDiffer>false</organismsDiffer>
    <experiments>3</experiments>
</comment>
<comment type="interaction">
    <interactant intactId="EBI-6447480">
        <id>P35548</id>
    </interactant>
    <interactant intactId="EBI-372094">
        <id>Q9BQY4</id>
        <label>RHOXF2</label>
    </interactant>
    <organismsDiffer>false</organismsDiffer>
    <experiments>3</experiments>
</comment>
<comment type="interaction">
    <interactant intactId="EBI-6447480">
        <id>P35548</id>
    </interactant>
    <interactant intactId="EBI-6422642">
        <id>Q01974</id>
        <label>ROR2</label>
    </interactant>
    <organismsDiffer>false</organismsDiffer>
    <experiments>3</experiments>
</comment>
<comment type="interaction">
    <interactant intactId="EBI-6447480">
        <id>P35548</id>
    </interactant>
    <interactant intactId="EBI-2822515">
        <id>Q8WU79</id>
        <label>SMAP2</label>
    </interactant>
    <organismsDiffer>false</organismsDiffer>
    <experiments>3</experiments>
</comment>
<comment type="interaction">
    <interactant intactId="EBI-6447480">
        <id>P35548</id>
    </interactant>
    <interactant intactId="EBI-11954419">
        <id>P35711-4</id>
        <label>SOX5</label>
    </interactant>
    <organismsDiffer>false</organismsDiffer>
    <experiments>3</experiments>
</comment>
<comment type="interaction">
    <interactant intactId="EBI-6447480">
        <id>P35548</id>
    </interactant>
    <interactant intactId="EBI-5235340">
        <id>Q7Z699</id>
        <label>SPRED1</label>
    </interactant>
    <organismsDiffer>false</organismsDiffer>
    <experiments>3</experiments>
</comment>
<comment type="interaction">
    <interactant intactId="EBI-6447480">
        <id>P35548</id>
    </interactant>
    <interactant intactId="EBI-11746252">
        <id>Q9NQB0-10</id>
        <label>TCF7L2</label>
    </interactant>
    <organismsDiffer>false</organismsDiffer>
    <experiments>3</experiments>
</comment>
<comment type="interaction">
    <interactant intactId="EBI-6447480">
        <id>P35548</id>
    </interactant>
    <interactant intactId="EBI-744726">
        <id>Q8NEK8</id>
        <label>TENT5D</label>
    </interactant>
    <organismsDiffer>false</organismsDiffer>
    <experiments>3</experiments>
</comment>
<comment type="interaction">
    <interactant intactId="EBI-6447480">
        <id>P35548</id>
    </interactant>
    <interactant intactId="EBI-11741437">
        <id>Q08117-2</id>
        <label>TLE5</label>
    </interactant>
    <organismsDiffer>false</organismsDiffer>
    <experiments>3</experiments>
</comment>
<comment type="interaction">
    <interactant intactId="EBI-6447480">
        <id>P35548</id>
    </interactant>
    <interactant intactId="EBI-3939165">
        <id>O43711</id>
        <label>TLX3</label>
    </interactant>
    <organismsDiffer>false</organismsDiffer>
    <experiments>3</experiments>
</comment>
<comment type="interaction">
    <interactant intactId="EBI-6447480">
        <id>P35548</id>
    </interactant>
    <interactant intactId="EBI-74615">
        <id>Q9H0E2</id>
        <label>TOLLIP</label>
    </interactant>
    <organismsDiffer>false</organismsDiffer>
    <experiments>3</experiments>
</comment>
<comment type="interaction">
    <interactant intactId="EBI-6447480">
        <id>P35548</id>
    </interactant>
    <interactant intactId="EBI-12806590">
        <id>Q86WV8</id>
        <label>TSC1</label>
    </interactant>
    <organismsDiffer>false</organismsDiffer>
    <experiments>3</experiments>
</comment>
<comment type="interaction">
    <interactant intactId="EBI-6447480">
        <id>P35548</id>
    </interactant>
    <interactant intactId="EBI-3918381">
        <id>Q96PN8</id>
        <label>TSSK3</label>
    </interactant>
    <organismsDiffer>false</organismsDiffer>
    <experiments>3</experiments>
</comment>
<comment type="interaction">
    <interactant intactId="EBI-6447480">
        <id>P35548</id>
    </interactant>
    <interactant intactId="EBI-11980193">
        <id>Q14119</id>
        <label>VEZF1</label>
    </interactant>
    <organismsDiffer>false</organismsDiffer>
    <experiments>3</experiments>
</comment>
<comment type="interaction">
    <interactant intactId="EBI-6447480">
        <id>P35548</id>
    </interactant>
    <interactant intactId="EBI-1051237">
        <id>Q9BYJ9</id>
        <label>YTHDF1</label>
    </interactant>
    <organismsDiffer>false</organismsDiffer>
    <experiments>3</experiments>
</comment>
<comment type="interaction">
    <interactant intactId="EBI-6447480">
        <id>P35548</id>
    </interactant>
    <interactant intactId="EBI-742550">
        <id>Q96K80</id>
        <label>ZC3H10</label>
    </interactant>
    <organismsDiffer>false</organismsDiffer>
    <experiments>3</experiments>
</comment>
<comment type="interaction">
    <interactant intactId="EBI-6447480">
        <id>P35548</id>
    </interactant>
    <interactant intactId="EBI-10237226">
        <id>Q15911-2</id>
        <label>ZFHX3</label>
    </interactant>
    <organismsDiffer>false</organismsDiffer>
    <experiments>3</experiments>
</comment>
<comment type="subcellular location">
    <subcellularLocation>
        <location>Nucleus</location>
    </subcellularLocation>
</comment>
<comment type="disease" evidence="4 5">
    <disease id="DI-02130">
        <name>Parietal foramina 1</name>
        <acronym>PFM1</acronym>
        <description>Autosomal dominant disease characterized by oval defects of the parietal bones caused by deficient ossification around the parietal notch, which is normally obliterated during the fifth fetal month.</description>
        <dbReference type="MIM" id="168500"/>
    </disease>
    <text>The disease is caused by variants affecting the gene represented in this entry.</text>
</comment>
<comment type="disease" evidence="7">
    <disease id="DI-02132">
        <name>Parietal foramina with cleidocranial dysplasia</name>
        <acronym>PFMCCD</acronym>
        <description>Combines skull defects in the form of enlarged parietal foramina and deficient ossification of the clavicles.</description>
        <dbReference type="MIM" id="168550"/>
    </disease>
    <text>The disease is caused by variants affecting the gene represented in this entry.</text>
</comment>
<comment type="disease" evidence="9 10 14">
    <disease id="DI-00382">
        <name>Craniosynostosis 2</name>
        <acronym>CRS2</acronym>
        <description>A primary abnormality of skull growth involving premature fusion of one or more cranial sutures. The growth velocity of the skull often cannot match that of the developing brain resulting in an abnormal head shape and, in some cases, increased intracranial pressure, which must be treated promptly to avoid permanent neurodevelopmental disability. CRS2 is characterized by either fronto-orbital recession, or frontal bossing, or turribrachycephaly, or cloverleaf skull. Associated features include severe headache, high incidence of visual problems (myopia or hyperopia), and short first metatarsals. Intelligence is normal.</description>
        <dbReference type="MIM" id="604757"/>
    </disease>
    <text>The disease is caused by variants affecting the gene represented in this entry.</text>
</comment>
<comment type="similarity">
    <text evidence="17">Belongs to the Msh homeobox family.</text>
</comment>
<gene>
    <name type="primary">MSX2</name>
    <name type="synonym">HOX8</name>
</gene>
<name>MSX2_HUMAN</name>
<feature type="chain" id="PRO_0000049099" description="Homeobox protein MSX-2">
    <location>
        <begin position="1"/>
        <end position="267"/>
    </location>
</feature>
<feature type="DNA-binding region" description="Homeobox" evidence="2">
    <location>
        <begin position="142"/>
        <end position="201"/>
    </location>
</feature>
<feature type="region of interest" description="Disordered" evidence="3">
    <location>
        <begin position="1"/>
        <end position="71"/>
    </location>
</feature>
<feature type="region of interest" description="Disordered" evidence="3">
    <location>
        <begin position="116"/>
        <end position="147"/>
    </location>
</feature>
<feature type="compositionally biased region" description="Low complexity" evidence="3">
    <location>
        <begin position="62"/>
        <end position="71"/>
    </location>
</feature>
<feature type="compositionally biased region" description="Basic residues" evidence="3">
    <location>
        <begin position="136"/>
        <end position="146"/>
    </location>
</feature>
<feature type="sequence variant" id="VAR_010898" description="In dbSNP:rs4242182." evidence="4 8 11 12 13 14 15 16">
    <original>M</original>
    <variation>T</variation>
    <location>
        <position position="129"/>
    </location>
</feature>
<feature type="sequence variant" id="VAR_003755" description="In CRS2; gain of function; dbSNP:rs104893895." evidence="14">
    <original>P</original>
    <variation>H</variation>
    <location>
        <position position="148"/>
    </location>
</feature>
<feature type="sequence variant" id="VAR_071634" description="In CRS2; dbSNP:rs104893895." evidence="9 10">
    <original>P</original>
    <variation>L</variation>
    <location>
        <position position="148"/>
    </location>
</feature>
<feature type="sequence variant" id="VAR_010786" description="In PFM1." evidence="5">
    <original>L</original>
    <variation>P</variation>
    <location>
        <position position="154"/>
    </location>
</feature>
<feature type="sequence variant" id="VAR_010200" description="In PFM1; loss of function." evidence="4">
    <location>
        <begin position="159"/>
        <end position="160"/>
    </location>
</feature>
<feature type="sequence variant" id="VAR_010201" description="In PFM1; loss of function; dbSNP:rs104893896." evidence="4 5">
    <original>R</original>
    <variation>H</variation>
    <location>
        <position position="172"/>
    </location>
</feature>
<feature type="mutagenesis site" description="Does not bind DNA but still suppresses OCFRE activation." evidence="6">
    <original>T</original>
    <variation>A</variation>
    <location>
        <position position="147"/>
    </location>
</feature>
<feature type="sequence conflict" description="In Ref. 1; CAA49156." evidence="17" ref="1">
    <original>P</original>
    <variation>L</variation>
    <location>
        <position position="28"/>
    </location>
</feature>
<feature type="sequence conflict" description="In Ref. 1; CAA49156." evidence="17" ref="1">
    <original>E</original>
    <variation>A</variation>
    <location>
        <position position="32"/>
    </location>
</feature>
<feature type="sequence conflict" description="In Ref. 1; CAA49156." evidence="17" ref="1">
    <original>ASPL</original>
    <variation>SPAV</variation>
    <location>
        <begin position="62"/>
        <end position="65"/>
    </location>
</feature>
<feature type="sequence conflict" description="In Ref. 1; CAA49156." evidence="17" ref="1">
    <original>A</original>
    <variation>P</variation>
    <location>
        <position position="67"/>
    </location>
</feature>
<feature type="sequence conflict" description="In Ref. 1; CAA49156." evidence="17" ref="1">
    <original>S</original>
    <variation>G</variation>
    <location>
        <position position="69"/>
    </location>
</feature>
<feature type="sequence conflict" description="In Ref. 1; CAA49156." evidence="17" ref="1">
    <original>T</original>
    <variation>H</variation>
    <location>
        <position position="75"/>
    </location>
</feature>
<feature type="sequence conflict" description="In Ref. 1; CAA49156." evidence="17" ref="1">
    <original>G</original>
    <variation>R</variation>
    <location>
        <position position="85"/>
    </location>
</feature>
<feature type="sequence conflict" description="In Ref. 1; CAA49156." evidence="17" ref="1">
    <original>E</original>
    <variation>G</variation>
    <location>
        <position position="107"/>
    </location>
</feature>
<feature type="sequence conflict" description="In Ref. 1; CAA49156." evidence="17" ref="1">
    <original>R</original>
    <variation>S</variation>
    <location>
        <position position="194"/>
    </location>
</feature>
<feature type="sequence conflict" description="In Ref. 1; CAA49156." evidence="17" ref="1">
    <original>G</original>
    <variation>A</variation>
    <location>
        <position position="237"/>
    </location>
</feature>
<accession>P35548</accession>
<accession>D3DQN1</accession>
<accession>Q53XM4</accession>
<accession>Q9UD60</accession>
<organism>
    <name type="scientific">Homo sapiens</name>
    <name type="common">Human</name>
    <dbReference type="NCBI Taxonomy" id="9606"/>
    <lineage>
        <taxon>Eukaryota</taxon>
        <taxon>Metazoa</taxon>
        <taxon>Chordata</taxon>
        <taxon>Craniata</taxon>
        <taxon>Vertebrata</taxon>
        <taxon>Euteleostomi</taxon>
        <taxon>Mammalia</taxon>
        <taxon>Eutheria</taxon>
        <taxon>Euarchontoglires</taxon>
        <taxon>Primates</taxon>
        <taxon>Haplorrhini</taxon>
        <taxon>Catarrhini</taxon>
        <taxon>Hominidae</taxon>
        <taxon>Homo</taxon>
    </lineage>
</organism>
<evidence type="ECO:0000250" key="1"/>
<evidence type="ECO:0000255" key="2">
    <source>
        <dbReference type="PROSITE-ProRule" id="PRU00108"/>
    </source>
</evidence>
<evidence type="ECO:0000256" key="3">
    <source>
        <dbReference type="SAM" id="MobiDB-lite"/>
    </source>
</evidence>
<evidence type="ECO:0000269" key="4">
    <source>
    </source>
</evidence>
<evidence type="ECO:0000269" key="5">
    <source>
    </source>
</evidence>
<evidence type="ECO:0000269" key="6">
    <source>
    </source>
</evidence>
<evidence type="ECO:0000269" key="7">
    <source>
    </source>
</evidence>
<evidence type="ECO:0000269" key="8">
    <source>
    </source>
</evidence>
<evidence type="ECO:0000269" key="9">
    <source>
    </source>
</evidence>
<evidence type="ECO:0000269" key="10">
    <source>
    </source>
</evidence>
<evidence type="ECO:0000269" key="11">
    <source>
    </source>
</evidence>
<evidence type="ECO:0000269" key="12">
    <source>
    </source>
</evidence>
<evidence type="ECO:0000269" key="13">
    <source>
    </source>
</evidence>
<evidence type="ECO:0000269" key="14">
    <source>
    </source>
</evidence>
<evidence type="ECO:0000269" key="15">
    <source ref="5"/>
</evidence>
<evidence type="ECO:0000269" key="16">
    <source ref="7"/>
</evidence>
<evidence type="ECO:0000305" key="17"/>
<dbReference type="EMBL" id="X69295">
    <property type="protein sequence ID" value="CAA49156.1"/>
    <property type="molecule type" value="mRNA"/>
</dbReference>
<dbReference type="EMBL" id="L22499">
    <property type="protein sequence ID" value="AAB42178.1"/>
    <property type="molecule type" value="Genomic_DNA"/>
</dbReference>
<dbReference type="EMBL" id="L22498">
    <property type="protein sequence ID" value="AAB42178.1"/>
    <property type="status" value="JOINED"/>
    <property type="molecule type" value="Genomic_DNA"/>
</dbReference>
<dbReference type="EMBL" id="S75308">
    <property type="protein sequence ID" value="AAD14169.1"/>
    <property type="molecule type" value="Genomic_DNA"/>
</dbReference>
<dbReference type="EMBL" id="S75361">
    <property type="protein sequence ID" value="AAB33867.1"/>
    <property type="molecule type" value="mRNA"/>
</dbReference>
<dbReference type="EMBL" id="D31771">
    <property type="protein sequence ID" value="BAA06549.1"/>
    <property type="molecule type" value="mRNA"/>
</dbReference>
<dbReference type="EMBL" id="D89377">
    <property type="protein sequence ID" value="BAA13949.1"/>
    <property type="molecule type" value="mRNA"/>
</dbReference>
<dbReference type="EMBL" id="BT009814">
    <property type="protein sequence ID" value="AAP88816.1"/>
    <property type="molecule type" value="mRNA"/>
</dbReference>
<dbReference type="EMBL" id="AC117531">
    <property type="status" value="NOT_ANNOTATED_CDS"/>
    <property type="molecule type" value="Genomic_DNA"/>
</dbReference>
<dbReference type="EMBL" id="CH471062">
    <property type="protein sequence ID" value="EAW61381.1"/>
    <property type="molecule type" value="Genomic_DNA"/>
</dbReference>
<dbReference type="EMBL" id="CH471062">
    <property type="protein sequence ID" value="EAW61382.1"/>
    <property type="molecule type" value="Genomic_DNA"/>
</dbReference>
<dbReference type="EMBL" id="BC015509">
    <property type="protein sequence ID" value="AAH15509.1"/>
    <property type="molecule type" value="mRNA"/>
</dbReference>
<dbReference type="EMBL" id="D14970">
    <property type="protein sequence ID" value="BAA03611.1"/>
    <property type="molecule type" value="mRNA"/>
</dbReference>
<dbReference type="CCDS" id="CCDS4392.1"/>
<dbReference type="PIR" id="A49068">
    <property type="entry name" value="A49068"/>
</dbReference>
<dbReference type="RefSeq" id="NP_002440.2">
    <property type="nucleotide sequence ID" value="NM_002449.4"/>
</dbReference>
<dbReference type="SMR" id="P35548"/>
<dbReference type="BioGRID" id="110594">
    <property type="interactions" value="187"/>
</dbReference>
<dbReference type="FunCoup" id="P35548">
    <property type="interactions" value="1796"/>
</dbReference>
<dbReference type="IntAct" id="P35548">
    <property type="interactions" value="46"/>
</dbReference>
<dbReference type="STRING" id="9606.ENSP00000239243"/>
<dbReference type="GlyGen" id="P35548">
    <property type="glycosylation" value="1 site"/>
</dbReference>
<dbReference type="iPTMnet" id="P35548"/>
<dbReference type="PhosphoSitePlus" id="P35548"/>
<dbReference type="BioMuta" id="MSX2"/>
<dbReference type="DMDM" id="311033429"/>
<dbReference type="jPOST" id="P35548"/>
<dbReference type="MassIVE" id="P35548"/>
<dbReference type="PaxDb" id="9606-ENSP00000239243"/>
<dbReference type="PeptideAtlas" id="P35548"/>
<dbReference type="ProteomicsDB" id="55080"/>
<dbReference type="Pumba" id="P35548"/>
<dbReference type="Antibodypedia" id="905">
    <property type="antibodies" value="392 antibodies from 32 providers"/>
</dbReference>
<dbReference type="DNASU" id="4488"/>
<dbReference type="Ensembl" id="ENST00000239243.7">
    <property type="protein sequence ID" value="ENSP00000239243.5"/>
    <property type="gene ID" value="ENSG00000120149.9"/>
</dbReference>
<dbReference type="GeneID" id="4488"/>
<dbReference type="KEGG" id="hsa:4488"/>
<dbReference type="MANE-Select" id="ENST00000239243.7">
    <property type="protein sequence ID" value="ENSP00000239243.5"/>
    <property type="RefSeq nucleotide sequence ID" value="NM_002449.5"/>
    <property type="RefSeq protein sequence ID" value="NP_002440.2"/>
</dbReference>
<dbReference type="UCSC" id="uc003mcy.4">
    <property type="organism name" value="human"/>
</dbReference>
<dbReference type="AGR" id="HGNC:7392"/>
<dbReference type="CTD" id="4488"/>
<dbReference type="DisGeNET" id="4488"/>
<dbReference type="GeneCards" id="MSX2"/>
<dbReference type="GeneReviews" id="MSX2"/>
<dbReference type="HGNC" id="HGNC:7392">
    <property type="gene designation" value="MSX2"/>
</dbReference>
<dbReference type="HPA" id="ENSG00000120149">
    <property type="expression patterns" value="Tissue enhanced (parathyroid gland, placenta, urinary bladder)"/>
</dbReference>
<dbReference type="MalaCards" id="MSX2"/>
<dbReference type="MIM" id="123101">
    <property type="type" value="gene"/>
</dbReference>
<dbReference type="MIM" id="168500">
    <property type="type" value="phenotype"/>
</dbReference>
<dbReference type="MIM" id="168550">
    <property type="type" value="phenotype"/>
</dbReference>
<dbReference type="MIM" id="604757">
    <property type="type" value="phenotype"/>
</dbReference>
<dbReference type="neXtProt" id="NX_P35548"/>
<dbReference type="OpenTargets" id="ENSG00000120149"/>
<dbReference type="Orphanet" id="1541">
    <property type="disease" value="Craniosynostosis, Boston type"/>
</dbReference>
<dbReference type="Orphanet" id="60015">
    <property type="disease" value="Enlarged parietal foramina"/>
</dbReference>
<dbReference type="Orphanet" id="251290">
    <property type="disease" value="Parietal foramina with clavicular hypoplasia"/>
</dbReference>
<dbReference type="PharmGKB" id="PA31197"/>
<dbReference type="VEuPathDB" id="HostDB:ENSG00000120149"/>
<dbReference type="eggNOG" id="KOG0492">
    <property type="taxonomic scope" value="Eukaryota"/>
</dbReference>
<dbReference type="GeneTree" id="ENSGT00940000159824"/>
<dbReference type="HOGENOM" id="CLU_072675_0_0_1"/>
<dbReference type="InParanoid" id="P35548"/>
<dbReference type="OMA" id="PVGYNMY"/>
<dbReference type="OrthoDB" id="6159439at2759"/>
<dbReference type="PAN-GO" id="P35548">
    <property type="GO annotations" value="5 GO annotations based on evolutionary models"/>
</dbReference>
<dbReference type="PhylomeDB" id="P35548"/>
<dbReference type="TreeFam" id="TF350699"/>
<dbReference type="PathwayCommons" id="P35548"/>
<dbReference type="Reactome" id="R-HSA-8939902">
    <property type="pathway name" value="Regulation of RUNX2 expression and activity"/>
</dbReference>
<dbReference type="SignaLink" id="P35548"/>
<dbReference type="SIGNOR" id="P35548"/>
<dbReference type="BioGRID-ORCS" id="4488">
    <property type="hits" value="21 hits in 1167 CRISPR screens"/>
</dbReference>
<dbReference type="ChiTaRS" id="MSX2">
    <property type="organism name" value="human"/>
</dbReference>
<dbReference type="GeneWiki" id="Msh_homeobox_2"/>
<dbReference type="GenomeRNAi" id="4488"/>
<dbReference type="Pharos" id="P35548">
    <property type="development level" value="Tbio"/>
</dbReference>
<dbReference type="PRO" id="PR:P35548"/>
<dbReference type="Proteomes" id="UP000005640">
    <property type="component" value="Chromosome 5"/>
</dbReference>
<dbReference type="RNAct" id="P35548">
    <property type="molecule type" value="protein"/>
</dbReference>
<dbReference type="Bgee" id="ENSG00000120149">
    <property type="expression patterns" value="Expressed in placenta and 113 other cell types or tissues"/>
</dbReference>
<dbReference type="ExpressionAtlas" id="P35548">
    <property type="expression patterns" value="baseline and differential"/>
</dbReference>
<dbReference type="GO" id="GO:0000785">
    <property type="term" value="C:chromatin"/>
    <property type="evidence" value="ECO:0000247"/>
    <property type="project" value="NTNU_SB"/>
</dbReference>
<dbReference type="GO" id="GO:0005829">
    <property type="term" value="C:cytosol"/>
    <property type="evidence" value="ECO:0000314"/>
    <property type="project" value="HPA"/>
</dbReference>
<dbReference type="GO" id="GO:0016607">
    <property type="term" value="C:nuclear speck"/>
    <property type="evidence" value="ECO:0000314"/>
    <property type="project" value="HPA"/>
</dbReference>
<dbReference type="GO" id="GO:0005634">
    <property type="term" value="C:nucleus"/>
    <property type="evidence" value="ECO:0000318"/>
    <property type="project" value="GO_Central"/>
</dbReference>
<dbReference type="GO" id="GO:0005667">
    <property type="term" value="C:transcription regulator complex"/>
    <property type="evidence" value="ECO:0007669"/>
    <property type="project" value="Ensembl"/>
</dbReference>
<dbReference type="GO" id="GO:0000981">
    <property type="term" value="F:DNA-binding transcription factor activity, RNA polymerase II-specific"/>
    <property type="evidence" value="ECO:0000247"/>
    <property type="project" value="NTNU_SB"/>
</dbReference>
<dbReference type="GO" id="GO:0001227">
    <property type="term" value="F:DNA-binding transcription repressor activity, RNA polymerase II-specific"/>
    <property type="evidence" value="ECO:0000250"/>
    <property type="project" value="BHF-UCL"/>
</dbReference>
<dbReference type="GO" id="GO:0000978">
    <property type="term" value="F:RNA polymerase II cis-regulatory region sequence-specific DNA binding"/>
    <property type="evidence" value="ECO:0007669"/>
    <property type="project" value="Ensembl"/>
</dbReference>
<dbReference type="GO" id="GO:0000977">
    <property type="term" value="F:RNA polymerase II transcription regulatory region sequence-specific DNA binding"/>
    <property type="evidence" value="ECO:0000318"/>
    <property type="project" value="GO_Central"/>
</dbReference>
<dbReference type="GO" id="GO:0043565">
    <property type="term" value="F:sequence-specific DNA binding"/>
    <property type="evidence" value="ECO:0000314"/>
    <property type="project" value="MGI"/>
</dbReference>
<dbReference type="GO" id="GO:1990837">
    <property type="term" value="F:sequence-specific double-stranded DNA binding"/>
    <property type="evidence" value="ECO:0000314"/>
    <property type="project" value="ARUK-UCL"/>
</dbReference>
<dbReference type="GO" id="GO:0000976">
    <property type="term" value="F:transcription cis-regulatory region binding"/>
    <property type="evidence" value="ECO:0000250"/>
    <property type="project" value="UniProtKB"/>
</dbReference>
<dbReference type="GO" id="GO:0090427">
    <property type="term" value="P:activation of meiosis"/>
    <property type="evidence" value="ECO:0007669"/>
    <property type="project" value="Ensembl"/>
</dbReference>
<dbReference type="GO" id="GO:0009952">
    <property type="term" value="P:anterior/posterior pattern specification"/>
    <property type="evidence" value="ECO:0007669"/>
    <property type="project" value="Ensembl"/>
</dbReference>
<dbReference type="GO" id="GO:0030509">
    <property type="term" value="P:BMP signaling pathway"/>
    <property type="evidence" value="ECO:0007669"/>
    <property type="project" value="Ensembl"/>
</dbReference>
<dbReference type="GO" id="GO:0060346">
    <property type="term" value="P:bone trabecula formation"/>
    <property type="evidence" value="ECO:0007669"/>
    <property type="project" value="Ensembl"/>
</dbReference>
<dbReference type="GO" id="GO:0060444">
    <property type="term" value="P:branching involved in mammary gland duct morphogenesis"/>
    <property type="evidence" value="ECO:0007669"/>
    <property type="project" value="Ensembl"/>
</dbReference>
<dbReference type="GO" id="GO:0003161">
    <property type="term" value="P:cardiac conduction system development"/>
    <property type="evidence" value="ECO:0000303"/>
    <property type="project" value="BHF-UCL"/>
</dbReference>
<dbReference type="GO" id="GO:0061311">
    <property type="term" value="P:cell surface receptor signaling pathway involved in heart development"/>
    <property type="evidence" value="ECO:0007669"/>
    <property type="project" value="Ensembl"/>
</dbReference>
<dbReference type="GO" id="GO:0071392">
    <property type="term" value="P:cellular response to estradiol stimulus"/>
    <property type="evidence" value="ECO:0007669"/>
    <property type="project" value="Ensembl"/>
</dbReference>
<dbReference type="GO" id="GO:0002063">
    <property type="term" value="P:chondrocyte development"/>
    <property type="evidence" value="ECO:0007669"/>
    <property type="project" value="Ensembl"/>
</dbReference>
<dbReference type="GO" id="GO:0060363">
    <property type="term" value="P:cranial suture morphogenesis"/>
    <property type="evidence" value="ECO:0000304"/>
    <property type="project" value="BHF-UCL"/>
</dbReference>
<dbReference type="GO" id="GO:0035115">
    <property type="term" value="P:embryonic forelimb morphogenesis"/>
    <property type="evidence" value="ECO:0007669"/>
    <property type="project" value="Ensembl"/>
</dbReference>
<dbReference type="GO" id="GO:0035116">
    <property type="term" value="P:embryonic hindlimb morphogenesis"/>
    <property type="evidence" value="ECO:0007669"/>
    <property type="project" value="Ensembl"/>
</dbReference>
<dbReference type="GO" id="GO:0048598">
    <property type="term" value="P:embryonic morphogenesis"/>
    <property type="evidence" value="ECO:0000318"/>
    <property type="project" value="GO_Central"/>
</dbReference>
<dbReference type="GO" id="GO:0035880">
    <property type="term" value="P:embryonic nail plate morphogenesis"/>
    <property type="evidence" value="ECO:0007669"/>
    <property type="project" value="Ensembl"/>
</dbReference>
<dbReference type="GO" id="GO:0070166">
    <property type="term" value="P:enamel mineralization"/>
    <property type="evidence" value="ECO:0007669"/>
    <property type="project" value="Ensembl"/>
</dbReference>
<dbReference type="GO" id="GO:0003416">
    <property type="term" value="P:endochondral bone growth"/>
    <property type="evidence" value="ECO:0007669"/>
    <property type="project" value="Ensembl"/>
</dbReference>
<dbReference type="GO" id="GO:0003198">
    <property type="term" value="P:epithelial to mesenchymal transition involved in endocardial cushion formation"/>
    <property type="evidence" value="ECO:0007669"/>
    <property type="project" value="Ensembl"/>
</dbReference>
<dbReference type="GO" id="GO:0060364">
    <property type="term" value="P:frontal suture morphogenesis"/>
    <property type="evidence" value="ECO:0007669"/>
    <property type="project" value="Ensembl"/>
</dbReference>
<dbReference type="GO" id="GO:0097152">
    <property type="term" value="P:mesenchymal cell apoptotic process"/>
    <property type="evidence" value="ECO:0007669"/>
    <property type="project" value="Ensembl"/>
</dbReference>
<dbReference type="GO" id="GO:0043066">
    <property type="term" value="P:negative regulation of apoptotic process"/>
    <property type="evidence" value="ECO:0007669"/>
    <property type="project" value="Ensembl"/>
</dbReference>
<dbReference type="GO" id="GO:0008285">
    <property type="term" value="P:negative regulation of cell population proliferation"/>
    <property type="evidence" value="ECO:0007669"/>
    <property type="project" value="Ensembl"/>
</dbReference>
<dbReference type="GO" id="GO:0045892">
    <property type="term" value="P:negative regulation of DNA-templated transcription"/>
    <property type="evidence" value="ECO:0000250"/>
    <property type="project" value="UniProtKB"/>
</dbReference>
<dbReference type="GO" id="GO:0045599">
    <property type="term" value="P:negative regulation of fat cell differentiation"/>
    <property type="evidence" value="ECO:0007669"/>
    <property type="project" value="Ensembl"/>
</dbReference>
<dbReference type="GO" id="GO:0045617">
    <property type="term" value="P:negative regulation of keratinocyte differentiation"/>
    <property type="evidence" value="ECO:0007669"/>
    <property type="project" value="Ensembl"/>
</dbReference>
<dbReference type="GO" id="GO:0000122">
    <property type="term" value="P:negative regulation of transcription by RNA polymerase II"/>
    <property type="evidence" value="ECO:0000315"/>
    <property type="project" value="UniProtKB"/>
</dbReference>
<dbReference type="GO" id="GO:0002076">
    <property type="term" value="P:osteoblast development"/>
    <property type="evidence" value="ECO:0007669"/>
    <property type="project" value="Ensembl"/>
</dbReference>
<dbReference type="GO" id="GO:0001649">
    <property type="term" value="P:osteoblast differentiation"/>
    <property type="evidence" value="ECO:0000250"/>
    <property type="project" value="UniProtKB"/>
</dbReference>
<dbReference type="GO" id="GO:0003148">
    <property type="term" value="P:outflow tract septum morphogenesis"/>
    <property type="evidence" value="ECO:0007669"/>
    <property type="project" value="Ensembl"/>
</dbReference>
<dbReference type="GO" id="GO:0030513">
    <property type="term" value="P:positive regulation of BMP signaling pathway"/>
    <property type="evidence" value="ECO:0007669"/>
    <property type="project" value="Ensembl"/>
</dbReference>
<dbReference type="GO" id="GO:2001055">
    <property type="term" value="P:positive regulation of mesenchymal cell apoptotic process"/>
    <property type="evidence" value="ECO:0007669"/>
    <property type="project" value="Ensembl"/>
</dbReference>
<dbReference type="GO" id="GO:0045669">
    <property type="term" value="P:positive regulation of osteoblast differentiation"/>
    <property type="evidence" value="ECO:0007669"/>
    <property type="project" value="Ensembl"/>
</dbReference>
<dbReference type="GO" id="GO:0051795">
    <property type="term" value="P:positive regulation of timing of catagen"/>
    <property type="evidence" value="ECO:0007669"/>
    <property type="project" value="Ensembl"/>
</dbReference>
<dbReference type="GO" id="GO:0006357">
    <property type="term" value="P:regulation of transcription by RNA polymerase II"/>
    <property type="evidence" value="ECO:0000318"/>
    <property type="project" value="GO_Central"/>
</dbReference>
<dbReference type="GO" id="GO:0023019">
    <property type="term" value="P:signal transduction involved in regulation of gene expression"/>
    <property type="evidence" value="ECO:0007669"/>
    <property type="project" value="Ensembl"/>
</dbReference>
<dbReference type="GO" id="GO:0048863">
    <property type="term" value="P:stem cell differentiation"/>
    <property type="evidence" value="ECO:0007669"/>
    <property type="project" value="Ensembl"/>
</dbReference>
<dbReference type="GO" id="GO:0035313">
    <property type="term" value="P:wound healing, spreading of epidermal cells"/>
    <property type="evidence" value="ECO:0007669"/>
    <property type="project" value="Ensembl"/>
</dbReference>
<dbReference type="CDD" id="cd00086">
    <property type="entry name" value="homeodomain"/>
    <property type="match status" value="1"/>
</dbReference>
<dbReference type="FunFam" id="1.10.10.60:FF:000134">
    <property type="entry name" value="Homeobox protein MSX-1"/>
    <property type="match status" value="1"/>
</dbReference>
<dbReference type="Gene3D" id="1.10.10.60">
    <property type="entry name" value="Homeodomain-like"/>
    <property type="match status" value="1"/>
</dbReference>
<dbReference type="InterPro" id="IPR001356">
    <property type="entry name" value="HD"/>
</dbReference>
<dbReference type="InterPro" id="IPR020479">
    <property type="entry name" value="HD_metazoa"/>
</dbReference>
<dbReference type="InterPro" id="IPR017970">
    <property type="entry name" value="Homeobox_CS"/>
</dbReference>
<dbReference type="InterPro" id="IPR009057">
    <property type="entry name" value="Homeodomain-like_sf"/>
</dbReference>
<dbReference type="InterPro" id="IPR050674">
    <property type="entry name" value="Msh_Homeobox_Regulators"/>
</dbReference>
<dbReference type="PANTHER" id="PTHR24338">
    <property type="entry name" value="HOMEOBOX PROTEIN MSX"/>
    <property type="match status" value="1"/>
</dbReference>
<dbReference type="PANTHER" id="PTHR24338:SF10">
    <property type="entry name" value="HOMEOBOX PROTEIN MSX-2"/>
    <property type="match status" value="1"/>
</dbReference>
<dbReference type="Pfam" id="PF00046">
    <property type="entry name" value="Homeodomain"/>
    <property type="match status" value="1"/>
</dbReference>
<dbReference type="PRINTS" id="PR00024">
    <property type="entry name" value="HOMEOBOX"/>
</dbReference>
<dbReference type="SMART" id="SM00389">
    <property type="entry name" value="HOX"/>
    <property type="match status" value="1"/>
</dbReference>
<dbReference type="SUPFAM" id="SSF46689">
    <property type="entry name" value="Homeodomain-like"/>
    <property type="match status" value="1"/>
</dbReference>
<dbReference type="PROSITE" id="PS00027">
    <property type="entry name" value="HOMEOBOX_1"/>
    <property type="match status" value="1"/>
</dbReference>
<dbReference type="PROSITE" id="PS50071">
    <property type="entry name" value="HOMEOBOX_2"/>
    <property type="match status" value="1"/>
</dbReference>
<protein>
    <recommendedName>
        <fullName>Homeobox protein MSX-2</fullName>
    </recommendedName>
    <alternativeName>
        <fullName>Homeobox protein Hox-8</fullName>
    </alternativeName>
</protein>
<proteinExistence type="evidence at protein level"/>
<keyword id="KW-0989">Craniosynostosis</keyword>
<keyword id="KW-0217">Developmental protein</keyword>
<keyword id="KW-0225">Disease variant</keyword>
<keyword id="KW-0238">DNA-binding</keyword>
<keyword id="KW-0371">Homeobox</keyword>
<keyword id="KW-0539">Nucleus</keyword>
<keyword id="KW-0892">Osteogenesis</keyword>
<keyword id="KW-1267">Proteomics identification</keyword>
<keyword id="KW-1185">Reference proteome</keyword>
<keyword id="KW-0678">Repressor</keyword>
<keyword id="KW-0804">Transcription</keyword>
<keyword id="KW-0805">Transcription regulation</keyword>